<evidence type="ECO:0000255" key="1">
    <source>
        <dbReference type="HAMAP-Rule" id="MF_01322"/>
    </source>
</evidence>
<name>RPOC_RICPR</name>
<organism>
    <name type="scientific">Rickettsia prowazekii (strain Madrid E)</name>
    <dbReference type="NCBI Taxonomy" id="272947"/>
    <lineage>
        <taxon>Bacteria</taxon>
        <taxon>Pseudomonadati</taxon>
        <taxon>Pseudomonadota</taxon>
        <taxon>Alphaproteobacteria</taxon>
        <taxon>Rickettsiales</taxon>
        <taxon>Rickettsiaceae</taxon>
        <taxon>Rickettsieae</taxon>
        <taxon>Rickettsia</taxon>
        <taxon>typhus group</taxon>
    </lineage>
</organism>
<proteinExistence type="inferred from homology"/>
<keyword id="KW-0240">DNA-directed RNA polymerase</keyword>
<keyword id="KW-0460">Magnesium</keyword>
<keyword id="KW-0479">Metal-binding</keyword>
<keyword id="KW-0548">Nucleotidyltransferase</keyword>
<keyword id="KW-1185">Reference proteome</keyword>
<keyword id="KW-0804">Transcription</keyword>
<keyword id="KW-0808">Transferase</keyword>
<keyword id="KW-0862">Zinc</keyword>
<protein>
    <recommendedName>
        <fullName evidence="1">DNA-directed RNA polymerase subunit beta'</fullName>
        <shortName evidence="1">RNAP subunit beta'</shortName>
        <ecNumber evidence="1">2.7.7.6</ecNumber>
    </recommendedName>
    <alternativeName>
        <fullName evidence="1">RNA polymerase subunit beta'</fullName>
    </alternativeName>
    <alternativeName>
        <fullName evidence="1">Transcriptase subunit beta'</fullName>
    </alternativeName>
</protein>
<gene>
    <name evidence="1" type="primary">rpoC</name>
    <name type="ordered locus">RP141</name>
</gene>
<feature type="chain" id="PRO_0000067786" description="DNA-directed RNA polymerase subunit beta'">
    <location>
        <begin position="1"/>
        <end position="1372"/>
    </location>
</feature>
<feature type="binding site" evidence="1">
    <location>
        <position position="69"/>
    </location>
    <ligand>
        <name>Zn(2+)</name>
        <dbReference type="ChEBI" id="CHEBI:29105"/>
        <label>1</label>
    </ligand>
</feature>
<feature type="binding site" evidence="1">
    <location>
        <position position="71"/>
    </location>
    <ligand>
        <name>Zn(2+)</name>
        <dbReference type="ChEBI" id="CHEBI:29105"/>
        <label>1</label>
    </ligand>
</feature>
<feature type="binding site" evidence="1">
    <location>
        <position position="84"/>
    </location>
    <ligand>
        <name>Zn(2+)</name>
        <dbReference type="ChEBI" id="CHEBI:29105"/>
        <label>1</label>
    </ligand>
</feature>
<feature type="binding site" evidence="1">
    <location>
        <position position="87"/>
    </location>
    <ligand>
        <name>Zn(2+)</name>
        <dbReference type="ChEBI" id="CHEBI:29105"/>
        <label>1</label>
    </ligand>
</feature>
<feature type="binding site" evidence="1">
    <location>
        <position position="460"/>
    </location>
    <ligand>
        <name>Mg(2+)</name>
        <dbReference type="ChEBI" id="CHEBI:18420"/>
    </ligand>
</feature>
<feature type="binding site" evidence="1">
    <location>
        <position position="462"/>
    </location>
    <ligand>
        <name>Mg(2+)</name>
        <dbReference type="ChEBI" id="CHEBI:18420"/>
    </ligand>
</feature>
<feature type="binding site" evidence="1">
    <location>
        <position position="464"/>
    </location>
    <ligand>
        <name>Mg(2+)</name>
        <dbReference type="ChEBI" id="CHEBI:18420"/>
    </ligand>
</feature>
<feature type="binding site" evidence="1">
    <location>
        <position position="808"/>
    </location>
    <ligand>
        <name>Zn(2+)</name>
        <dbReference type="ChEBI" id="CHEBI:29105"/>
        <label>2</label>
    </ligand>
</feature>
<feature type="binding site" evidence="1">
    <location>
        <position position="882"/>
    </location>
    <ligand>
        <name>Zn(2+)</name>
        <dbReference type="ChEBI" id="CHEBI:29105"/>
        <label>2</label>
    </ligand>
</feature>
<feature type="binding site" evidence="1">
    <location>
        <position position="889"/>
    </location>
    <ligand>
        <name>Zn(2+)</name>
        <dbReference type="ChEBI" id="CHEBI:29105"/>
        <label>2</label>
    </ligand>
</feature>
<feature type="binding site" evidence="1">
    <location>
        <position position="892"/>
    </location>
    <ligand>
        <name>Zn(2+)</name>
        <dbReference type="ChEBI" id="CHEBI:29105"/>
        <label>2</label>
    </ligand>
</feature>
<feature type="sequence variant" description="In strain: Breinl.">
    <original>S</original>
    <variation>G</variation>
    <location>
        <position position="33"/>
    </location>
</feature>
<reference key="1">
    <citation type="journal article" date="1998" name="Nature">
        <title>The genome sequence of Rickettsia prowazekii and the origin of mitochondria.</title>
        <authorList>
            <person name="Andersson S.G.E."/>
            <person name="Zomorodipour A."/>
            <person name="Andersson J.O."/>
            <person name="Sicheritz-Ponten T."/>
            <person name="Alsmark U.C.M."/>
            <person name="Podowski R.M."/>
            <person name="Naeslund A.K."/>
            <person name="Eriksson A.-S."/>
            <person name="Winkler H.H."/>
            <person name="Kurland C.G."/>
        </authorList>
    </citation>
    <scope>NUCLEOTIDE SEQUENCE [LARGE SCALE GENOMIC DNA]</scope>
    <source>
        <strain>Madrid E</strain>
    </source>
</reference>
<reference key="2">
    <citation type="journal article" date="1999" name="Antimicrob. Agents Chemother.">
        <title>Characterization of mutations in the rpoB gene in naturally rifampin-resistant Rickettsia species.</title>
        <authorList>
            <person name="Drancourt M."/>
            <person name="Raoult D."/>
        </authorList>
    </citation>
    <scope>NUCLEOTIDE SEQUENCE [GENOMIC DNA] OF 1-33</scope>
    <source>
        <strain>ATCC VR-142 / Breinl</strain>
    </source>
</reference>
<sequence length="1372" mass="153382">MSVVNFYGQLSNTQQFDQIRINIASPDQVRSWSFGEVTKPETINYRTFKPEKDGLFCARIFGPVKDYECLCGKYKRMKNRGITCEKCGVEVTVSRVRRERMGHIELAAPVAHIWFLKSLPSRISTLLDMTMRDVEKILYFENYVVVDPGLSILQKGELLTEEELQKAKDKYGEDAFTASIGAEVIQQMLKELDFSKLKQELYDELHITSSEVKKKKLVKRLKLVEDFLESENKPEWMIMDVLPVIPPEIRPLVMLDGGRFATSDLNELYRRVINRNNRLKKLIESKAPDIIVRNEKRMLQEAVDALFDNGRRGRAAKNANKRPFKSLSDMLKGKQGRFRQNLLGKRVDYSGRSVIVVGPELKLHQCGLPKKMALELFKPFIYSKLELYGIATTIKAAKRMVEAEKPEVWDVLEEVIREHPVLLNRAPTLHRLGIQAFEPLLIEGKAIQLHPLVCAAFNADFDGDQMAVHIPLSIEAQLEARVFMMSTNNILSPANGRPIIVPDKDIVLGLYYLTIAFDNEVGEGMMFSDLAEMEHALYNKFITIHTKIKYRRDQLNAEGKMVPVIIDTTYGRLMVGELLPSNPNIEFKFINKQLTKKDISLVIDLVYRHCGQKATVIFADQLMKLGFKYACSSGISFGMDDMVVPESKSTHINETQLEIKEFEQQYSNGLITYGEKYNKVVDAWSRCTDRVANDMMKEIATPPVNDYPNHQKINAIYMMAISGARGSFQQIKQLGGMRGLMTKSNGQIIQTPIISNFKEGLTEFECFNSANGMRKGQIDTALKTASSGYLTRKLVDVAQDCIITEKDCGTDKGIEVKSVIEGGEIIVPLAEKILGRTAAIDIFHPVTNDLILNKGELINESKLEQIESAGLDRIMIKSVLTCESSTGICSICYGRDLATGTLVSEGEAIGVIAAQSIGEPGTQLTMRTFHIGGAATKGAEVSSVEASYDAKVKIISRNVVINSEERKIVMSRNCELLLLDNNGNEKARHKIPYGARLLVDDGDMVIKTQKLAEWDPYTIPIITEKSGKVLFKDMVEGISIRDVTDEATGIPSKVIIESKQYSRGAELRPRIQLLDSKGEVITLSNGLEARYYLPVGAVLSVEDGIQISVGDIIARIPKESTTTKDITGGLPRVAELVEARRPKDHAVIAEVDGRVEFGKDYKSKRRIIIHPIDGTMSIEYMVPKGKHVVVNEGDFVKKGDLLIDGNPVLQDILKVMGVEVLANYIVKEVQAVYRLQGVKIDDKHIEVIIRQMLQKVEVTDSGGTTLLVGEKIDRHEFDEINAKAMKNGLKPAEAQLILQGITKASLQTRSFISAASFQETTRVLTEAAIAGKVDKLRGLKENVIVGRLVPAGTGYFMDKMRKAAVKLDEENV</sequence>
<dbReference type="EC" id="2.7.7.6" evidence="1"/>
<dbReference type="EMBL" id="AJ235270">
    <property type="protein sequence ID" value="CAA14609.1"/>
    <property type="molecule type" value="Genomic_DNA"/>
</dbReference>
<dbReference type="EMBL" id="AF076437">
    <property type="protein sequence ID" value="AAF22440.1"/>
    <property type="molecule type" value="Genomic_DNA"/>
</dbReference>
<dbReference type="PIR" id="B71724">
    <property type="entry name" value="B71724"/>
</dbReference>
<dbReference type="RefSeq" id="NP_220532.1">
    <property type="nucleotide sequence ID" value="NC_000963.1"/>
</dbReference>
<dbReference type="RefSeq" id="WP_004597190.1">
    <property type="nucleotide sequence ID" value="NC_000963.1"/>
</dbReference>
<dbReference type="SMR" id="Q9ZE20"/>
<dbReference type="STRING" id="272947.gene:17555224"/>
<dbReference type="EnsemblBacteria" id="CAA14609">
    <property type="protein sequence ID" value="CAA14609"/>
    <property type="gene ID" value="CAA14609"/>
</dbReference>
<dbReference type="GeneID" id="57569269"/>
<dbReference type="KEGG" id="rpr:RP141"/>
<dbReference type="PATRIC" id="fig|272947.5.peg.143"/>
<dbReference type="eggNOG" id="COG0086">
    <property type="taxonomic scope" value="Bacteria"/>
</dbReference>
<dbReference type="HOGENOM" id="CLU_000524_3_1_5"/>
<dbReference type="OrthoDB" id="9815296at2"/>
<dbReference type="Proteomes" id="UP000002480">
    <property type="component" value="Chromosome"/>
</dbReference>
<dbReference type="GO" id="GO:0000428">
    <property type="term" value="C:DNA-directed RNA polymerase complex"/>
    <property type="evidence" value="ECO:0007669"/>
    <property type="project" value="UniProtKB-KW"/>
</dbReference>
<dbReference type="GO" id="GO:0003677">
    <property type="term" value="F:DNA binding"/>
    <property type="evidence" value="ECO:0007669"/>
    <property type="project" value="UniProtKB-UniRule"/>
</dbReference>
<dbReference type="GO" id="GO:0003899">
    <property type="term" value="F:DNA-directed RNA polymerase activity"/>
    <property type="evidence" value="ECO:0007669"/>
    <property type="project" value="UniProtKB-UniRule"/>
</dbReference>
<dbReference type="GO" id="GO:0000287">
    <property type="term" value="F:magnesium ion binding"/>
    <property type="evidence" value="ECO:0007669"/>
    <property type="project" value="UniProtKB-UniRule"/>
</dbReference>
<dbReference type="GO" id="GO:0008270">
    <property type="term" value="F:zinc ion binding"/>
    <property type="evidence" value="ECO:0007669"/>
    <property type="project" value="UniProtKB-UniRule"/>
</dbReference>
<dbReference type="GO" id="GO:0006351">
    <property type="term" value="P:DNA-templated transcription"/>
    <property type="evidence" value="ECO:0007669"/>
    <property type="project" value="UniProtKB-UniRule"/>
</dbReference>
<dbReference type="CDD" id="cd02655">
    <property type="entry name" value="RNAP_beta'_C"/>
    <property type="match status" value="1"/>
</dbReference>
<dbReference type="CDD" id="cd01609">
    <property type="entry name" value="RNAP_beta'_N"/>
    <property type="match status" value="1"/>
</dbReference>
<dbReference type="FunFam" id="1.10.150.390:FF:000002">
    <property type="entry name" value="DNA-directed RNA polymerase subunit beta"/>
    <property type="match status" value="1"/>
</dbReference>
<dbReference type="Gene3D" id="1.10.132.30">
    <property type="match status" value="1"/>
</dbReference>
<dbReference type="Gene3D" id="1.10.150.390">
    <property type="match status" value="1"/>
</dbReference>
<dbReference type="Gene3D" id="1.10.1790.20">
    <property type="match status" value="1"/>
</dbReference>
<dbReference type="Gene3D" id="1.10.40.90">
    <property type="match status" value="1"/>
</dbReference>
<dbReference type="Gene3D" id="2.40.40.20">
    <property type="match status" value="1"/>
</dbReference>
<dbReference type="Gene3D" id="2.40.50.100">
    <property type="match status" value="3"/>
</dbReference>
<dbReference type="Gene3D" id="4.10.860.120">
    <property type="entry name" value="RNA polymerase II, clamp domain"/>
    <property type="match status" value="1"/>
</dbReference>
<dbReference type="Gene3D" id="1.10.274.100">
    <property type="entry name" value="RNA polymerase Rpb1, domain 3"/>
    <property type="match status" value="2"/>
</dbReference>
<dbReference type="HAMAP" id="MF_01322">
    <property type="entry name" value="RNApol_bact_RpoC"/>
    <property type="match status" value="1"/>
</dbReference>
<dbReference type="InterPro" id="IPR045867">
    <property type="entry name" value="DNA-dir_RpoC_beta_prime"/>
</dbReference>
<dbReference type="InterPro" id="IPR012754">
    <property type="entry name" value="DNA-dir_RpoC_beta_prime_bact"/>
</dbReference>
<dbReference type="InterPro" id="IPR000722">
    <property type="entry name" value="RNA_pol_asu"/>
</dbReference>
<dbReference type="InterPro" id="IPR006592">
    <property type="entry name" value="RNA_pol_N"/>
</dbReference>
<dbReference type="InterPro" id="IPR007080">
    <property type="entry name" value="RNA_pol_Rpb1_1"/>
</dbReference>
<dbReference type="InterPro" id="IPR007066">
    <property type="entry name" value="RNA_pol_Rpb1_3"/>
</dbReference>
<dbReference type="InterPro" id="IPR042102">
    <property type="entry name" value="RNA_pol_Rpb1_3_sf"/>
</dbReference>
<dbReference type="InterPro" id="IPR007083">
    <property type="entry name" value="RNA_pol_Rpb1_4"/>
</dbReference>
<dbReference type="InterPro" id="IPR007081">
    <property type="entry name" value="RNA_pol_Rpb1_5"/>
</dbReference>
<dbReference type="InterPro" id="IPR044893">
    <property type="entry name" value="RNA_pol_Rpb1_clamp_domain"/>
</dbReference>
<dbReference type="InterPro" id="IPR038120">
    <property type="entry name" value="Rpb1_funnel_sf"/>
</dbReference>
<dbReference type="NCBIfam" id="TIGR02386">
    <property type="entry name" value="rpoC_TIGR"/>
    <property type="match status" value="1"/>
</dbReference>
<dbReference type="PANTHER" id="PTHR19376">
    <property type="entry name" value="DNA-DIRECTED RNA POLYMERASE"/>
    <property type="match status" value="1"/>
</dbReference>
<dbReference type="PANTHER" id="PTHR19376:SF54">
    <property type="entry name" value="DNA-DIRECTED RNA POLYMERASE SUBUNIT BETA"/>
    <property type="match status" value="1"/>
</dbReference>
<dbReference type="Pfam" id="PF04997">
    <property type="entry name" value="RNA_pol_Rpb1_1"/>
    <property type="match status" value="1"/>
</dbReference>
<dbReference type="Pfam" id="PF00623">
    <property type="entry name" value="RNA_pol_Rpb1_2"/>
    <property type="match status" value="2"/>
</dbReference>
<dbReference type="Pfam" id="PF04983">
    <property type="entry name" value="RNA_pol_Rpb1_3"/>
    <property type="match status" value="1"/>
</dbReference>
<dbReference type="Pfam" id="PF05000">
    <property type="entry name" value="RNA_pol_Rpb1_4"/>
    <property type="match status" value="1"/>
</dbReference>
<dbReference type="Pfam" id="PF04998">
    <property type="entry name" value="RNA_pol_Rpb1_5"/>
    <property type="match status" value="1"/>
</dbReference>
<dbReference type="SMART" id="SM00663">
    <property type="entry name" value="RPOLA_N"/>
    <property type="match status" value="1"/>
</dbReference>
<dbReference type="SUPFAM" id="SSF64484">
    <property type="entry name" value="beta and beta-prime subunits of DNA dependent RNA-polymerase"/>
    <property type="match status" value="1"/>
</dbReference>
<comment type="function">
    <text evidence="1">DNA-dependent RNA polymerase catalyzes the transcription of DNA into RNA using the four ribonucleoside triphosphates as substrates.</text>
</comment>
<comment type="catalytic activity">
    <reaction evidence="1">
        <text>RNA(n) + a ribonucleoside 5'-triphosphate = RNA(n+1) + diphosphate</text>
        <dbReference type="Rhea" id="RHEA:21248"/>
        <dbReference type="Rhea" id="RHEA-COMP:14527"/>
        <dbReference type="Rhea" id="RHEA-COMP:17342"/>
        <dbReference type="ChEBI" id="CHEBI:33019"/>
        <dbReference type="ChEBI" id="CHEBI:61557"/>
        <dbReference type="ChEBI" id="CHEBI:140395"/>
        <dbReference type="EC" id="2.7.7.6"/>
    </reaction>
</comment>
<comment type="cofactor">
    <cofactor evidence="1">
        <name>Mg(2+)</name>
        <dbReference type="ChEBI" id="CHEBI:18420"/>
    </cofactor>
    <text evidence="1">Binds 1 Mg(2+) ion per subunit.</text>
</comment>
<comment type="cofactor">
    <cofactor evidence="1">
        <name>Zn(2+)</name>
        <dbReference type="ChEBI" id="CHEBI:29105"/>
    </cofactor>
    <text evidence="1">Binds 2 Zn(2+) ions per subunit.</text>
</comment>
<comment type="subunit">
    <text evidence="1">The RNAP catalytic core consists of 2 alpha, 1 beta, 1 beta' and 1 omega subunit. When a sigma factor is associated with the core the holoenzyme is formed, which can initiate transcription.</text>
</comment>
<comment type="similarity">
    <text evidence="1">Belongs to the RNA polymerase beta' chain family.</text>
</comment>
<accession>Q9ZE20</accession>
<accession>Q9RH36</accession>